<accession>A8ES84</accession>
<protein>
    <recommendedName>
        <fullName evidence="1">Elongation factor Ts</fullName>
        <shortName evidence="1">EF-Ts</shortName>
    </recommendedName>
</protein>
<name>EFTS_ALIB4</name>
<evidence type="ECO:0000255" key="1">
    <source>
        <dbReference type="HAMAP-Rule" id="MF_00050"/>
    </source>
</evidence>
<keyword id="KW-0963">Cytoplasm</keyword>
<keyword id="KW-0251">Elongation factor</keyword>
<keyword id="KW-0648">Protein biosynthesis</keyword>
<keyword id="KW-1185">Reference proteome</keyword>
<organism>
    <name type="scientific">Aliarcobacter butzleri (strain RM4018)</name>
    <name type="common">Arcobacter butzleri</name>
    <dbReference type="NCBI Taxonomy" id="367737"/>
    <lineage>
        <taxon>Bacteria</taxon>
        <taxon>Pseudomonadati</taxon>
        <taxon>Campylobacterota</taxon>
        <taxon>Epsilonproteobacteria</taxon>
        <taxon>Campylobacterales</taxon>
        <taxon>Arcobacteraceae</taxon>
        <taxon>Aliarcobacter</taxon>
    </lineage>
</organism>
<proteinExistence type="inferred from homology"/>
<comment type="function">
    <text evidence="1">Associates with the EF-Tu.GDP complex and induces the exchange of GDP to GTP. It remains bound to the aminoacyl-tRNA.EF-Tu.GTP complex up to the GTP hydrolysis stage on the ribosome.</text>
</comment>
<comment type="subcellular location">
    <subcellularLocation>
        <location evidence="1">Cytoplasm</location>
    </subcellularLocation>
</comment>
<comment type="similarity">
    <text evidence="1">Belongs to the EF-Ts family.</text>
</comment>
<dbReference type="EMBL" id="CP000361">
    <property type="protein sequence ID" value="ABV66808.1"/>
    <property type="molecule type" value="Genomic_DNA"/>
</dbReference>
<dbReference type="RefSeq" id="WP_004510606.1">
    <property type="nucleotide sequence ID" value="NC_009850.1"/>
</dbReference>
<dbReference type="SMR" id="A8ES84"/>
<dbReference type="STRING" id="367737.Abu_0541"/>
<dbReference type="GeneID" id="24303520"/>
<dbReference type="KEGG" id="abu:Abu_0541"/>
<dbReference type="eggNOG" id="COG0264">
    <property type="taxonomic scope" value="Bacteria"/>
</dbReference>
<dbReference type="HOGENOM" id="CLU_047155_0_1_7"/>
<dbReference type="Proteomes" id="UP000001136">
    <property type="component" value="Chromosome"/>
</dbReference>
<dbReference type="GO" id="GO:0005737">
    <property type="term" value="C:cytoplasm"/>
    <property type="evidence" value="ECO:0007669"/>
    <property type="project" value="UniProtKB-SubCell"/>
</dbReference>
<dbReference type="GO" id="GO:0003746">
    <property type="term" value="F:translation elongation factor activity"/>
    <property type="evidence" value="ECO:0007669"/>
    <property type="project" value="UniProtKB-UniRule"/>
</dbReference>
<dbReference type="CDD" id="cd14275">
    <property type="entry name" value="UBA_EF-Ts"/>
    <property type="match status" value="1"/>
</dbReference>
<dbReference type="FunFam" id="1.10.8.10:FF:000001">
    <property type="entry name" value="Elongation factor Ts"/>
    <property type="match status" value="1"/>
</dbReference>
<dbReference type="Gene3D" id="1.10.8.10">
    <property type="entry name" value="DNA helicase RuvA subunit, C-terminal domain"/>
    <property type="match status" value="1"/>
</dbReference>
<dbReference type="Gene3D" id="3.30.479.20">
    <property type="entry name" value="Elongation factor Ts, dimerisation domain"/>
    <property type="match status" value="3"/>
</dbReference>
<dbReference type="HAMAP" id="MF_00050">
    <property type="entry name" value="EF_Ts"/>
    <property type="match status" value="1"/>
</dbReference>
<dbReference type="InterPro" id="IPR036402">
    <property type="entry name" value="EF-Ts_dimer_sf"/>
</dbReference>
<dbReference type="InterPro" id="IPR001816">
    <property type="entry name" value="Transl_elong_EFTs/EF1B"/>
</dbReference>
<dbReference type="InterPro" id="IPR014039">
    <property type="entry name" value="Transl_elong_EFTs/EF1B_dimer"/>
</dbReference>
<dbReference type="InterPro" id="IPR018101">
    <property type="entry name" value="Transl_elong_Ts_CS"/>
</dbReference>
<dbReference type="InterPro" id="IPR009060">
    <property type="entry name" value="UBA-like_sf"/>
</dbReference>
<dbReference type="NCBIfam" id="TIGR00116">
    <property type="entry name" value="tsf"/>
    <property type="match status" value="1"/>
</dbReference>
<dbReference type="PANTHER" id="PTHR11741">
    <property type="entry name" value="ELONGATION FACTOR TS"/>
    <property type="match status" value="1"/>
</dbReference>
<dbReference type="PANTHER" id="PTHR11741:SF0">
    <property type="entry name" value="ELONGATION FACTOR TS, MITOCHONDRIAL"/>
    <property type="match status" value="1"/>
</dbReference>
<dbReference type="Pfam" id="PF00889">
    <property type="entry name" value="EF_TS"/>
    <property type="match status" value="2"/>
</dbReference>
<dbReference type="SUPFAM" id="SSF54713">
    <property type="entry name" value="Elongation factor Ts (EF-Ts), dimerisation domain"/>
    <property type="match status" value="2"/>
</dbReference>
<dbReference type="SUPFAM" id="SSF46934">
    <property type="entry name" value="UBA-like"/>
    <property type="match status" value="1"/>
</dbReference>
<dbReference type="PROSITE" id="PS01126">
    <property type="entry name" value="EF_TS_1"/>
    <property type="match status" value="1"/>
</dbReference>
<dbReference type="PROSITE" id="PS01127">
    <property type="entry name" value="EF_TS_2"/>
    <property type="match status" value="1"/>
</dbReference>
<gene>
    <name evidence="1" type="primary">tsf</name>
    <name type="ordered locus">Abu_0541</name>
</gene>
<sequence length="348" mass="37761">MAGVTPQLIKELREMTGAGMMDCKNALNETNGDLDKAVQALREAGLGKAAKKAGNVAAEGLISVLVNSDNTKAVLLELNSQTDFVAKNENFVNLTKEITTHALNNGIADAQTLASSKINGEEFQTYLNEKIATIGENLVARKLSLVSGQVVNGYVHATGRVGVVLAATCNDAVKDKAAALLRNIAMHASAMKPTVISYKDLDPAFVESENKAIRAEIEAENDELRRLGKPQKRIPEFVSKSQLTDEAIAAAKARFEDELKAQGKPEKIWANIIPGQIERFIADNTQLDGRFALLSQPYVMDDKKTVEQAIAEVDSSIVITEYIRFELGEGIEKKEEDFAAEVAKQMGK</sequence>
<reference key="1">
    <citation type="journal article" date="2007" name="PLoS ONE">
        <title>The complete genome sequence and analysis of the Epsilonproteobacterium Arcobacter butzleri.</title>
        <authorList>
            <person name="Miller W.G."/>
            <person name="Parker C.T."/>
            <person name="Rubenfield M."/>
            <person name="Mendz G.L."/>
            <person name="Woesten M.M.S.M."/>
            <person name="Ussery D.W."/>
            <person name="Stolz J.F."/>
            <person name="Binnewies T.T."/>
            <person name="Hallin P.F."/>
            <person name="Wang G."/>
            <person name="Malek J.A."/>
            <person name="Rogosin A."/>
            <person name="Stanker L.H."/>
            <person name="Mandrell R.E."/>
        </authorList>
    </citation>
    <scope>NUCLEOTIDE SEQUENCE [LARGE SCALE GENOMIC DNA]</scope>
    <source>
        <strain>RM4018</strain>
    </source>
</reference>
<feature type="chain" id="PRO_1000057350" description="Elongation factor Ts">
    <location>
        <begin position="1"/>
        <end position="348"/>
    </location>
</feature>
<feature type="region of interest" description="Involved in Mg(2+) ion dislocation from EF-Tu" evidence="1">
    <location>
        <begin position="82"/>
        <end position="85"/>
    </location>
</feature>